<reference key="1">
    <citation type="journal article" date="2000" name="Nucleic Acids Res.">
        <title>DNA sequence analysis of the photosynthesis region of Rhodobacter sphaeroides 2.4.1.</title>
        <authorList>
            <person name="Choudhary M."/>
            <person name="Kaplan S."/>
        </authorList>
    </citation>
    <scope>NUCLEOTIDE SEQUENCE [GENOMIC DNA]</scope>
</reference>
<reference key="2">
    <citation type="submission" date="2005-09" db="EMBL/GenBank/DDBJ databases">
        <title>Complete sequence of chromosome 1 of Rhodobacter sphaeroides 2.4.1.</title>
        <authorList>
            <person name="Copeland A."/>
            <person name="Lucas S."/>
            <person name="Lapidus A."/>
            <person name="Barry K."/>
            <person name="Detter J.C."/>
            <person name="Glavina T."/>
            <person name="Hammon N."/>
            <person name="Israni S."/>
            <person name="Pitluck S."/>
            <person name="Richardson P."/>
            <person name="Mackenzie C."/>
            <person name="Choudhary M."/>
            <person name="Larimer F."/>
            <person name="Hauser L.J."/>
            <person name="Land M."/>
            <person name="Donohue T.J."/>
            <person name="Kaplan S."/>
        </authorList>
    </citation>
    <scope>NUCLEOTIDE SEQUENCE [LARGE SCALE GENOMIC DNA]</scope>
    <source>
        <strain>ATCC 17023 / DSM 158 / JCM 6121 / CCUG 31486 / LMG 2827 / NBRC 12203 / NCIMB 8253 / ATH 2.4.1.</strain>
    </source>
</reference>
<dbReference type="EMBL" id="AF195122">
    <property type="protein sequence ID" value="AAF24251.1"/>
    <property type="status" value="ALT_INIT"/>
    <property type="molecule type" value="Genomic_DNA"/>
</dbReference>
<dbReference type="EMBL" id="CP000143">
    <property type="protein sequence ID" value="ABA79485.1"/>
    <property type="molecule type" value="Genomic_DNA"/>
</dbReference>
<dbReference type="RefSeq" id="WP_011338140.1">
    <property type="nucleotide sequence ID" value="NC_007493.2"/>
</dbReference>
<dbReference type="RefSeq" id="YP_353386.1">
    <property type="nucleotide sequence ID" value="NC_007493.2"/>
</dbReference>
<dbReference type="SMR" id="Q3J149"/>
<dbReference type="STRING" id="272943.RSP_0310"/>
<dbReference type="EnsemblBacteria" id="ABA79485">
    <property type="protein sequence ID" value="ABA79485"/>
    <property type="gene ID" value="RSP_0310"/>
</dbReference>
<dbReference type="GeneID" id="3719166"/>
<dbReference type="KEGG" id="rsp:RSP_0310"/>
<dbReference type="PATRIC" id="fig|272943.9.peg.2257"/>
<dbReference type="eggNOG" id="COG0829">
    <property type="taxonomic scope" value="Bacteria"/>
</dbReference>
<dbReference type="OrthoDB" id="9798842at2"/>
<dbReference type="PhylomeDB" id="Q3J149"/>
<dbReference type="Proteomes" id="UP000002703">
    <property type="component" value="Chromosome 1"/>
</dbReference>
<dbReference type="GO" id="GO:0005737">
    <property type="term" value="C:cytoplasm"/>
    <property type="evidence" value="ECO:0007669"/>
    <property type="project" value="UniProtKB-SubCell"/>
</dbReference>
<dbReference type="GO" id="GO:0016151">
    <property type="term" value="F:nickel cation binding"/>
    <property type="evidence" value="ECO:0007669"/>
    <property type="project" value="UniProtKB-UniRule"/>
</dbReference>
<dbReference type="HAMAP" id="MF_01384">
    <property type="entry name" value="UreD"/>
    <property type="match status" value="1"/>
</dbReference>
<dbReference type="InterPro" id="IPR002669">
    <property type="entry name" value="UreD"/>
</dbReference>
<dbReference type="PANTHER" id="PTHR33643">
    <property type="entry name" value="UREASE ACCESSORY PROTEIN D"/>
    <property type="match status" value="1"/>
</dbReference>
<dbReference type="PANTHER" id="PTHR33643:SF1">
    <property type="entry name" value="UREASE ACCESSORY PROTEIN D"/>
    <property type="match status" value="1"/>
</dbReference>
<dbReference type="Pfam" id="PF01774">
    <property type="entry name" value="UreD"/>
    <property type="match status" value="1"/>
</dbReference>
<feature type="chain" id="PRO_0000340505" description="Urease accessory protein UreD">
    <location>
        <begin position="1"/>
        <end position="275"/>
    </location>
</feature>
<feature type="sequence conflict" description="In Ref. 1; AAF24251." evidence="2" ref="1">
    <original>V</original>
    <variation>VLVM</variation>
    <location>
        <position position="51"/>
    </location>
</feature>
<feature type="sequence conflict" description="In Ref. 1; AAF24251." evidence="2" ref="1">
    <original>A</original>
    <variation>P</variation>
    <location>
        <position position="126"/>
    </location>
</feature>
<name>URED_CERS4</name>
<evidence type="ECO:0000255" key="1">
    <source>
        <dbReference type="HAMAP-Rule" id="MF_01384"/>
    </source>
</evidence>
<evidence type="ECO:0000305" key="2"/>
<sequence length="275" mass="28742">MNALTPLSARLERSDGHALVTLARSRGAVRLRDLAQRGSAKAFLPRVEGDVPEVVFLNTSGGLTGGDRLSYRLEVGEGCRATATTQTAERAYAAGAGAARVEVLHEVGRDGWLDWLPQETILFEGAALERETQISLAPGAGCLMVESVVLGRAAMGETLSRLAFRDRRSILRGGKPVVVEPLALDDRALAAAGGAAMLGGARALATLAMVGPGAEDALGPARAALGEAGVEAAASAFDGKLVLRLLAADGWPLRRQVARLLTVLRGRALPRVWQV</sequence>
<accession>Q3J149</accession>
<accession>Q9RFF6</accession>
<comment type="function">
    <text evidence="1">Required for maturation of urease via the functional incorporation of the urease nickel metallocenter.</text>
</comment>
<comment type="subunit">
    <text evidence="1">UreD, UreF and UreG form a complex that acts as a GTP-hydrolysis-dependent molecular chaperone, activating the urease apoprotein by helping to assemble the nickel containing metallocenter of UreC. The UreE protein probably delivers the nickel.</text>
</comment>
<comment type="subcellular location">
    <subcellularLocation>
        <location evidence="1">Cytoplasm</location>
    </subcellularLocation>
</comment>
<comment type="similarity">
    <text evidence="1">Belongs to the UreD family.</text>
</comment>
<comment type="sequence caution" evidence="2">
    <conflict type="erroneous initiation">
        <sequence resource="EMBL-CDS" id="AAF24251"/>
    </conflict>
</comment>
<keyword id="KW-0143">Chaperone</keyword>
<keyword id="KW-0963">Cytoplasm</keyword>
<keyword id="KW-0996">Nickel insertion</keyword>
<keyword id="KW-1185">Reference proteome</keyword>
<protein>
    <recommendedName>
        <fullName evidence="1">Urease accessory protein UreD</fullName>
    </recommendedName>
</protein>
<organism>
    <name type="scientific">Cereibacter sphaeroides (strain ATCC 17023 / DSM 158 / JCM 6121 / CCUG 31486 / LMG 2827 / NBRC 12203 / NCIMB 8253 / ATH 2.4.1.)</name>
    <name type="common">Rhodobacter sphaeroides</name>
    <dbReference type="NCBI Taxonomy" id="272943"/>
    <lineage>
        <taxon>Bacteria</taxon>
        <taxon>Pseudomonadati</taxon>
        <taxon>Pseudomonadota</taxon>
        <taxon>Alphaproteobacteria</taxon>
        <taxon>Rhodobacterales</taxon>
        <taxon>Paracoccaceae</taxon>
        <taxon>Cereibacter</taxon>
    </lineage>
</organism>
<proteinExistence type="inferred from homology"/>
<gene>
    <name evidence="1" type="primary">ureD</name>
    <name type="ordered locus">RHOS4_19170</name>
    <name type="ORF">RSP_0310</name>
</gene>